<name>PURT_BURCH</name>
<proteinExistence type="inferred from homology"/>
<gene>
    <name evidence="1" type="primary">purT</name>
    <name type="ordered locus">Bcen2424_2319</name>
</gene>
<protein>
    <recommendedName>
        <fullName evidence="1">Formate-dependent phosphoribosylglycinamide formyltransferase</fullName>
        <ecNumber evidence="1">6.3.1.21</ecNumber>
    </recommendedName>
    <alternativeName>
        <fullName evidence="1">5'-phosphoribosylglycinamide transformylase 2</fullName>
    </alternativeName>
    <alternativeName>
        <fullName evidence="1">Formate-dependent GAR transformylase</fullName>
    </alternativeName>
    <alternativeName>
        <fullName evidence="1">GAR transformylase 2</fullName>
        <shortName evidence="1">GART 2</shortName>
    </alternativeName>
    <alternativeName>
        <fullName evidence="1">Non-folate glycinamide ribonucleotide transformylase</fullName>
    </alternativeName>
    <alternativeName>
        <fullName evidence="1">Phosphoribosylglycinamide formyltransferase 2</fullName>
    </alternativeName>
</protein>
<keyword id="KW-0067">ATP-binding</keyword>
<keyword id="KW-0436">Ligase</keyword>
<keyword id="KW-0460">Magnesium</keyword>
<keyword id="KW-0479">Metal-binding</keyword>
<keyword id="KW-0547">Nucleotide-binding</keyword>
<keyword id="KW-0658">Purine biosynthesis</keyword>
<dbReference type="EC" id="6.3.1.21" evidence="1"/>
<dbReference type="EMBL" id="CP000458">
    <property type="protein sequence ID" value="ABK09070.1"/>
    <property type="molecule type" value="Genomic_DNA"/>
</dbReference>
<dbReference type="RefSeq" id="WP_011545863.1">
    <property type="nucleotide sequence ID" value="NC_008542.1"/>
</dbReference>
<dbReference type="SMR" id="A0K993"/>
<dbReference type="KEGG" id="bch:Bcen2424_2319"/>
<dbReference type="HOGENOM" id="CLU_011534_1_3_4"/>
<dbReference type="UniPathway" id="UPA00074">
    <property type="reaction ID" value="UER00127"/>
</dbReference>
<dbReference type="GO" id="GO:0005829">
    <property type="term" value="C:cytosol"/>
    <property type="evidence" value="ECO:0007669"/>
    <property type="project" value="TreeGrafter"/>
</dbReference>
<dbReference type="GO" id="GO:0005524">
    <property type="term" value="F:ATP binding"/>
    <property type="evidence" value="ECO:0007669"/>
    <property type="project" value="UniProtKB-UniRule"/>
</dbReference>
<dbReference type="GO" id="GO:0000287">
    <property type="term" value="F:magnesium ion binding"/>
    <property type="evidence" value="ECO:0007669"/>
    <property type="project" value="InterPro"/>
</dbReference>
<dbReference type="GO" id="GO:0043815">
    <property type="term" value="F:phosphoribosylglycinamide formyltransferase 2 activity"/>
    <property type="evidence" value="ECO:0007669"/>
    <property type="project" value="UniProtKB-UniRule"/>
</dbReference>
<dbReference type="GO" id="GO:0004644">
    <property type="term" value="F:phosphoribosylglycinamide formyltransferase activity"/>
    <property type="evidence" value="ECO:0007669"/>
    <property type="project" value="InterPro"/>
</dbReference>
<dbReference type="GO" id="GO:0006189">
    <property type="term" value="P:'de novo' IMP biosynthetic process"/>
    <property type="evidence" value="ECO:0007669"/>
    <property type="project" value="UniProtKB-UniRule"/>
</dbReference>
<dbReference type="FunFam" id="3.30.1490.20:FF:000013">
    <property type="entry name" value="Formate-dependent phosphoribosylglycinamide formyltransferase"/>
    <property type="match status" value="1"/>
</dbReference>
<dbReference type="FunFam" id="3.40.50.20:FF:000007">
    <property type="entry name" value="Formate-dependent phosphoribosylglycinamide formyltransferase"/>
    <property type="match status" value="1"/>
</dbReference>
<dbReference type="Gene3D" id="3.40.50.20">
    <property type="match status" value="1"/>
</dbReference>
<dbReference type="Gene3D" id="3.30.1490.20">
    <property type="entry name" value="ATP-grasp fold, A domain"/>
    <property type="match status" value="1"/>
</dbReference>
<dbReference type="Gene3D" id="3.30.470.20">
    <property type="entry name" value="ATP-grasp fold, B domain"/>
    <property type="match status" value="1"/>
</dbReference>
<dbReference type="HAMAP" id="MF_01643">
    <property type="entry name" value="PurT"/>
    <property type="match status" value="1"/>
</dbReference>
<dbReference type="InterPro" id="IPR011761">
    <property type="entry name" value="ATP-grasp"/>
</dbReference>
<dbReference type="InterPro" id="IPR003135">
    <property type="entry name" value="ATP-grasp_carboxylate-amine"/>
</dbReference>
<dbReference type="InterPro" id="IPR013815">
    <property type="entry name" value="ATP_grasp_subdomain_1"/>
</dbReference>
<dbReference type="InterPro" id="IPR016185">
    <property type="entry name" value="PreATP-grasp_dom_sf"/>
</dbReference>
<dbReference type="InterPro" id="IPR005862">
    <property type="entry name" value="PurT"/>
</dbReference>
<dbReference type="InterPro" id="IPR054350">
    <property type="entry name" value="PurT/PurK_preATP-grasp"/>
</dbReference>
<dbReference type="InterPro" id="IPR048740">
    <property type="entry name" value="PurT_C"/>
</dbReference>
<dbReference type="InterPro" id="IPR011054">
    <property type="entry name" value="Rudment_hybrid_motif"/>
</dbReference>
<dbReference type="NCBIfam" id="NF006766">
    <property type="entry name" value="PRK09288.1"/>
    <property type="match status" value="1"/>
</dbReference>
<dbReference type="NCBIfam" id="TIGR01142">
    <property type="entry name" value="purT"/>
    <property type="match status" value="1"/>
</dbReference>
<dbReference type="PANTHER" id="PTHR43055">
    <property type="entry name" value="FORMATE-DEPENDENT PHOSPHORIBOSYLGLYCINAMIDE FORMYLTRANSFERASE"/>
    <property type="match status" value="1"/>
</dbReference>
<dbReference type="PANTHER" id="PTHR43055:SF1">
    <property type="entry name" value="FORMATE-DEPENDENT PHOSPHORIBOSYLGLYCINAMIDE FORMYLTRANSFERASE"/>
    <property type="match status" value="1"/>
</dbReference>
<dbReference type="Pfam" id="PF02222">
    <property type="entry name" value="ATP-grasp"/>
    <property type="match status" value="1"/>
</dbReference>
<dbReference type="Pfam" id="PF21244">
    <property type="entry name" value="PurT_C"/>
    <property type="match status" value="1"/>
</dbReference>
<dbReference type="Pfam" id="PF22660">
    <property type="entry name" value="RS_preATP-grasp-like"/>
    <property type="match status" value="1"/>
</dbReference>
<dbReference type="SUPFAM" id="SSF56059">
    <property type="entry name" value="Glutathione synthetase ATP-binding domain-like"/>
    <property type="match status" value="1"/>
</dbReference>
<dbReference type="SUPFAM" id="SSF52440">
    <property type="entry name" value="PreATP-grasp domain"/>
    <property type="match status" value="1"/>
</dbReference>
<dbReference type="SUPFAM" id="SSF51246">
    <property type="entry name" value="Rudiment single hybrid motif"/>
    <property type="match status" value="1"/>
</dbReference>
<dbReference type="PROSITE" id="PS50975">
    <property type="entry name" value="ATP_GRASP"/>
    <property type="match status" value="1"/>
</dbReference>
<evidence type="ECO:0000255" key="1">
    <source>
        <dbReference type="HAMAP-Rule" id="MF_01643"/>
    </source>
</evidence>
<organism>
    <name type="scientific">Burkholderia cenocepacia (strain HI2424)</name>
    <dbReference type="NCBI Taxonomy" id="331272"/>
    <lineage>
        <taxon>Bacteria</taxon>
        <taxon>Pseudomonadati</taxon>
        <taxon>Pseudomonadota</taxon>
        <taxon>Betaproteobacteria</taxon>
        <taxon>Burkholderiales</taxon>
        <taxon>Burkholderiaceae</taxon>
        <taxon>Burkholderia</taxon>
        <taxon>Burkholderia cepacia complex</taxon>
    </lineage>
</organism>
<sequence length="404" mass="42990">MQIGQRLGTPLSPSATRVMLLGAGELGKEVIIALQRLGVEVVAVDRYPDAPGHQVAHRAHVIDMTDPAALRAIVEAERPHLIVPEIEAIATDALAAIEAAGLAEVIPTARATQLTMNREGIRRLAAEELGLPTSPYAFADSFEAFSAAVAKIGMPCVVKPVMSSSGKGQSVVKTDADVKPAWDYAMAGGRVNHGRVIVEGFVDFDYEITQLTVRAIDPATLDTRTYFCEPVGHVQVAGDYVESWQPQPMSAVALEKSREIAHKVTEALGGRGLFGVELFVRGDDVWFSEVSPRPHDTGLVTLASQRQSEFELHARAILGLPVDPALGTPAASAVIYGGLDERGIAFEGVRDALAVPGADLRLFGKPESFAKRRMGVALATGATVDEARERAKRAAAAVRPVSAR</sequence>
<reference key="1">
    <citation type="submission" date="2006-08" db="EMBL/GenBank/DDBJ databases">
        <title>Complete sequence of chromosome 1 of Burkholderia cenocepacia HI2424.</title>
        <authorList>
            <person name="Copeland A."/>
            <person name="Lucas S."/>
            <person name="Lapidus A."/>
            <person name="Barry K."/>
            <person name="Detter J.C."/>
            <person name="Glavina del Rio T."/>
            <person name="Hammon N."/>
            <person name="Israni S."/>
            <person name="Pitluck S."/>
            <person name="Chain P."/>
            <person name="Malfatti S."/>
            <person name="Shin M."/>
            <person name="Vergez L."/>
            <person name="Schmutz J."/>
            <person name="Larimer F."/>
            <person name="Land M."/>
            <person name="Hauser L."/>
            <person name="Kyrpides N."/>
            <person name="Kim E."/>
            <person name="LiPuma J.J."/>
            <person name="Gonzalez C.F."/>
            <person name="Konstantinidis K."/>
            <person name="Tiedje J.M."/>
            <person name="Richardson P."/>
        </authorList>
    </citation>
    <scope>NUCLEOTIDE SEQUENCE [LARGE SCALE GENOMIC DNA]</scope>
    <source>
        <strain>HI2424</strain>
    </source>
</reference>
<comment type="function">
    <text evidence="1">Involved in the de novo purine biosynthesis. Catalyzes the transfer of formate to 5-phospho-ribosyl-glycinamide (GAR), producing 5-phospho-ribosyl-N-formylglycinamide (FGAR). Formate is provided by PurU via hydrolysis of 10-formyl-tetrahydrofolate.</text>
</comment>
<comment type="catalytic activity">
    <reaction evidence="1">
        <text>N(1)-(5-phospho-beta-D-ribosyl)glycinamide + formate + ATP = N(2)-formyl-N(1)-(5-phospho-beta-D-ribosyl)glycinamide + ADP + phosphate + H(+)</text>
        <dbReference type="Rhea" id="RHEA:24829"/>
        <dbReference type="ChEBI" id="CHEBI:15378"/>
        <dbReference type="ChEBI" id="CHEBI:15740"/>
        <dbReference type="ChEBI" id="CHEBI:30616"/>
        <dbReference type="ChEBI" id="CHEBI:43474"/>
        <dbReference type="ChEBI" id="CHEBI:143788"/>
        <dbReference type="ChEBI" id="CHEBI:147286"/>
        <dbReference type="ChEBI" id="CHEBI:456216"/>
        <dbReference type="EC" id="6.3.1.21"/>
    </reaction>
    <physiologicalReaction direction="left-to-right" evidence="1">
        <dbReference type="Rhea" id="RHEA:24830"/>
    </physiologicalReaction>
</comment>
<comment type="pathway">
    <text evidence="1">Purine metabolism; IMP biosynthesis via de novo pathway; N(2)-formyl-N(1)-(5-phospho-D-ribosyl)glycinamide from N(1)-(5-phospho-D-ribosyl)glycinamide (formate route): step 1/1.</text>
</comment>
<comment type="subunit">
    <text evidence="1">Homodimer.</text>
</comment>
<comment type="similarity">
    <text evidence="1">Belongs to the PurK/PurT family.</text>
</comment>
<accession>A0K993</accession>
<feature type="chain" id="PRO_0000319135" description="Formate-dependent phosphoribosylglycinamide formyltransferase">
    <location>
        <begin position="1"/>
        <end position="404"/>
    </location>
</feature>
<feature type="domain" description="ATP-grasp" evidence="1">
    <location>
        <begin position="123"/>
        <end position="318"/>
    </location>
</feature>
<feature type="binding site" evidence="1">
    <location>
        <begin position="25"/>
        <end position="26"/>
    </location>
    <ligand>
        <name>N(1)-(5-phospho-beta-D-ribosyl)glycinamide</name>
        <dbReference type="ChEBI" id="CHEBI:143788"/>
    </ligand>
</feature>
<feature type="binding site" evidence="1">
    <location>
        <position position="85"/>
    </location>
    <ligand>
        <name>N(1)-(5-phospho-beta-D-ribosyl)glycinamide</name>
        <dbReference type="ChEBI" id="CHEBI:143788"/>
    </ligand>
</feature>
<feature type="binding site" evidence="1">
    <location>
        <position position="118"/>
    </location>
    <ligand>
        <name>ATP</name>
        <dbReference type="ChEBI" id="CHEBI:30616"/>
    </ligand>
</feature>
<feature type="binding site" evidence="1">
    <location>
        <position position="159"/>
    </location>
    <ligand>
        <name>ATP</name>
        <dbReference type="ChEBI" id="CHEBI:30616"/>
    </ligand>
</feature>
<feature type="binding site" evidence="1">
    <location>
        <begin position="164"/>
        <end position="169"/>
    </location>
    <ligand>
        <name>ATP</name>
        <dbReference type="ChEBI" id="CHEBI:30616"/>
    </ligand>
</feature>
<feature type="binding site" evidence="1">
    <location>
        <begin position="199"/>
        <end position="202"/>
    </location>
    <ligand>
        <name>ATP</name>
        <dbReference type="ChEBI" id="CHEBI:30616"/>
    </ligand>
</feature>
<feature type="binding site" evidence="1">
    <location>
        <position position="207"/>
    </location>
    <ligand>
        <name>ATP</name>
        <dbReference type="ChEBI" id="CHEBI:30616"/>
    </ligand>
</feature>
<feature type="binding site" evidence="1">
    <location>
        <position position="277"/>
    </location>
    <ligand>
        <name>Mg(2+)</name>
        <dbReference type="ChEBI" id="CHEBI:18420"/>
    </ligand>
</feature>
<feature type="binding site" evidence="1">
    <location>
        <position position="289"/>
    </location>
    <ligand>
        <name>Mg(2+)</name>
        <dbReference type="ChEBI" id="CHEBI:18420"/>
    </ligand>
</feature>
<feature type="binding site" evidence="1">
    <location>
        <position position="296"/>
    </location>
    <ligand>
        <name>N(1)-(5-phospho-beta-D-ribosyl)glycinamide</name>
        <dbReference type="ChEBI" id="CHEBI:143788"/>
    </ligand>
</feature>
<feature type="binding site" evidence="1">
    <location>
        <position position="365"/>
    </location>
    <ligand>
        <name>N(1)-(5-phospho-beta-D-ribosyl)glycinamide</name>
        <dbReference type="ChEBI" id="CHEBI:143788"/>
    </ligand>
</feature>
<feature type="binding site" evidence="1">
    <location>
        <begin position="372"/>
        <end position="373"/>
    </location>
    <ligand>
        <name>N(1)-(5-phospho-beta-D-ribosyl)glycinamide</name>
        <dbReference type="ChEBI" id="CHEBI:143788"/>
    </ligand>
</feature>